<gene>
    <name evidence="1" type="primary">nqrB</name>
    <name type="ordered locus">VIBHAR_03274</name>
</gene>
<feature type="chain" id="PRO_0000074445" description="Na(+)-translocating NADH-quinone reductase subunit B">
    <location>
        <begin position="1"/>
        <end position="413"/>
    </location>
</feature>
<feature type="transmembrane region" description="Helical" evidence="1">
    <location>
        <begin position="55"/>
        <end position="75"/>
    </location>
</feature>
<feature type="transmembrane region" description="Helical" evidence="1">
    <location>
        <begin position="128"/>
        <end position="148"/>
    </location>
</feature>
<feature type="transmembrane region" description="Helical" evidence="1">
    <location>
        <begin position="163"/>
        <end position="183"/>
    </location>
</feature>
<feature type="transmembrane region" description="Helical" evidence="1">
    <location>
        <begin position="267"/>
        <end position="287"/>
    </location>
</feature>
<feature type="transmembrane region" description="Helical" evidence="1">
    <location>
        <begin position="296"/>
        <end position="316"/>
    </location>
</feature>
<feature type="transmembrane region" description="Helical" evidence="1">
    <location>
        <begin position="324"/>
        <end position="344"/>
    </location>
</feature>
<feature type="transmembrane region" description="Helical" evidence="1">
    <location>
        <begin position="357"/>
        <end position="377"/>
    </location>
</feature>
<feature type="transmembrane region" description="Helical" evidence="1">
    <location>
        <begin position="380"/>
        <end position="400"/>
    </location>
</feature>
<feature type="modified residue" description="FMN phosphoryl threonine" evidence="1">
    <location>
        <position position="235"/>
    </location>
</feature>
<feature type="sequence conflict" description="In Ref. 1; AAF15412." evidence="2" ref="1">
    <original>G</original>
    <variation>R</variation>
    <location>
        <position position="243"/>
    </location>
</feature>
<keyword id="KW-0997">Cell inner membrane</keyword>
<keyword id="KW-1003">Cell membrane</keyword>
<keyword id="KW-0285">Flavoprotein</keyword>
<keyword id="KW-0288">FMN</keyword>
<keyword id="KW-0406">Ion transport</keyword>
<keyword id="KW-0472">Membrane</keyword>
<keyword id="KW-0520">NAD</keyword>
<keyword id="KW-0597">Phosphoprotein</keyword>
<keyword id="KW-0915">Sodium</keyword>
<keyword id="KW-0739">Sodium transport</keyword>
<keyword id="KW-1278">Translocase</keyword>
<keyword id="KW-0812">Transmembrane</keyword>
<keyword id="KW-1133">Transmembrane helix</keyword>
<keyword id="KW-0813">Transport</keyword>
<keyword id="KW-0830">Ubiquinone</keyword>
<evidence type="ECO:0000255" key="1">
    <source>
        <dbReference type="HAMAP-Rule" id="MF_00426"/>
    </source>
</evidence>
<evidence type="ECO:0000305" key="2"/>
<name>NQRB_VIBC1</name>
<proteinExistence type="inferred from homology"/>
<reference key="1">
    <citation type="journal article" date="1999" name="Biochemistry">
        <title>Sequencing and preliminary characterization of the Na+-translocating NADH:ubiquinone oxidoreductase from Vibrio harveyi.</title>
        <authorList>
            <person name="Zhou W."/>
            <person name="Bertsova Y.V."/>
            <person name="Feng B."/>
            <person name="Tsatsos P."/>
            <person name="Verkhovskaya M.L."/>
            <person name="Gennis R.B."/>
            <person name="Bogachev A.V."/>
            <person name="Barquera B."/>
        </authorList>
    </citation>
    <scope>NUCLEOTIDE SEQUENCE [GENOMIC DNA]</scope>
</reference>
<reference key="2">
    <citation type="submission" date="2007-08" db="EMBL/GenBank/DDBJ databases">
        <authorList>
            <consortium name="The Vibrio harveyi Genome Sequencing Project"/>
            <person name="Bassler B."/>
            <person name="Clifton S.W."/>
            <person name="Fulton L."/>
            <person name="Delehaunty K."/>
            <person name="Fronick C."/>
            <person name="Harrison M."/>
            <person name="Markivic C."/>
            <person name="Fulton R."/>
            <person name="Tin-Wollam A.-M."/>
            <person name="Shah N."/>
            <person name="Pepin K."/>
            <person name="Nash W."/>
            <person name="Thiruvilangam P."/>
            <person name="Bhonagiri V."/>
            <person name="Waters C."/>
            <person name="Tu K.C."/>
            <person name="Irgon J."/>
            <person name="Wilson R.K."/>
        </authorList>
    </citation>
    <scope>NUCLEOTIDE SEQUENCE [LARGE SCALE GENOMIC DNA]</scope>
    <source>
        <strain>ATCC BAA-1116 / BB120</strain>
    </source>
</reference>
<protein>
    <recommendedName>
        <fullName evidence="1">Na(+)-translocating NADH-quinone reductase subunit B</fullName>
        <shortName evidence="1">Na(+)-NQR subunit B</shortName>
        <shortName evidence="1">Na(+)-translocating NQR subunit B</shortName>
        <ecNumber evidence="1">7.2.1.1</ecNumber>
    </recommendedName>
    <alternativeName>
        <fullName evidence="1">NQR complex subunit B</fullName>
    </alternativeName>
    <alternativeName>
        <fullName evidence="1">NQR-1 subunit B</fullName>
    </alternativeName>
</protein>
<dbReference type="EC" id="7.2.1.1" evidence="1"/>
<dbReference type="EMBL" id="AF165980">
    <property type="protein sequence ID" value="AAF15412.1"/>
    <property type="molecule type" value="Genomic_DNA"/>
</dbReference>
<dbReference type="EMBL" id="CP000789">
    <property type="protein sequence ID" value="ABU72222.1"/>
    <property type="molecule type" value="Genomic_DNA"/>
</dbReference>
<dbReference type="RefSeq" id="WP_012128722.1">
    <property type="nucleotide sequence ID" value="NC_022269.1"/>
</dbReference>
<dbReference type="SMR" id="Q9RFW0"/>
<dbReference type="KEGG" id="vha:VIBHAR_03274"/>
<dbReference type="PATRIC" id="fig|338187.25.peg.2918"/>
<dbReference type="Proteomes" id="UP000008152">
    <property type="component" value="Chromosome I"/>
</dbReference>
<dbReference type="GO" id="GO:0005886">
    <property type="term" value="C:plasma membrane"/>
    <property type="evidence" value="ECO:0007669"/>
    <property type="project" value="UniProtKB-SubCell"/>
</dbReference>
<dbReference type="GO" id="GO:0010181">
    <property type="term" value="F:FMN binding"/>
    <property type="evidence" value="ECO:0007669"/>
    <property type="project" value="InterPro"/>
</dbReference>
<dbReference type="GO" id="GO:0016655">
    <property type="term" value="F:oxidoreductase activity, acting on NAD(P)H, quinone or similar compound as acceptor"/>
    <property type="evidence" value="ECO:0007669"/>
    <property type="project" value="UniProtKB-UniRule"/>
</dbReference>
<dbReference type="GO" id="GO:0022904">
    <property type="term" value="P:respiratory electron transport chain"/>
    <property type="evidence" value="ECO:0007669"/>
    <property type="project" value="InterPro"/>
</dbReference>
<dbReference type="GO" id="GO:0006814">
    <property type="term" value="P:sodium ion transport"/>
    <property type="evidence" value="ECO:0007669"/>
    <property type="project" value="UniProtKB-UniRule"/>
</dbReference>
<dbReference type="GO" id="GO:0055085">
    <property type="term" value="P:transmembrane transport"/>
    <property type="evidence" value="ECO:0007669"/>
    <property type="project" value="InterPro"/>
</dbReference>
<dbReference type="HAMAP" id="MF_00426">
    <property type="entry name" value="NqrB"/>
    <property type="match status" value="1"/>
</dbReference>
<dbReference type="InterPro" id="IPR010966">
    <property type="entry name" value="NqrB"/>
</dbReference>
<dbReference type="InterPro" id="IPR004338">
    <property type="entry name" value="NqrB/RnfD"/>
</dbReference>
<dbReference type="NCBIfam" id="TIGR01937">
    <property type="entry name" value="nqrB"/>
    <property type="match status" value="1"/>
</dbReference>
<dbReference type="NCBIfam" id="NF003756">
    <property type="entry name" value="PRK05349.1"/>
    <property type="match status" value="1"/>
</dbReference>
<dbReference type="PANTHER" id="PTHR30578">
    <property type="entry name" value="ELECTRON TRANSPORT COMPLEX PROTEIN RNFD"/>
    <property type="match status" value="1"/>
</dbReference>
<dbReference type="PANTHER" id="PTHR30578:SF1">
    <property type="entry name" value="NA(+)-TRANSLOCATING NADH-QUINONE REDUCTASE SUBUNIT B"/>
    <property type="match status" value="1"/>
</dbReference>
<dbReference type="Pfam" id="PF03116">
    <property type="entry name" value="NQR2_RnfD_RnfE"/>
    <property type="match status" value="1"/>
</dbReference>
<dbReference type="PIRSF" id="PIRSF016055">
    <property type="entry name" value="NADH-UbQ_OxRdtase_B_su"/>
    <property type="match status" value="1"/>
</dbReference>
<accession>Q9RFW0</accession>
<accession>A7N1U5</accession>
<sequence>MLKKFIEDIEHHFEPGGKHEKWFALYEAAATLFYTPGLVTKRSSHVRDSVDLKRIMIMVWFAVFPAMFWGMYNAGGQAIAALNHMYAGDQLATVIAGNWHYWLTEMLGGTIGAEAGVGSMMLLGATYFLPIYATVFIVGGFWEVLFCMVRKHEVNEGFFVTSILFALIVPPTLPLWQAALGITFGVVVAKEIFGGTGRNFLNPALAGRAFLFFAYPAQISGDVVWTAADGFSGATALSQWAHGGSGALINNITGAPITWMDAFIGNIPGSIGEVSTLALMIGAAMIVYMRIASWRIIAGVMIGMIAVSTLFNVIGSDTNPMFNMPWHWHLVLGGFAFGMFFMATDPVSASFTNSGKWWYGILIGAMCVMIRVVNPAYPEGMMLAILFANLFAPLFDHVVIEKNIKRRLARYGK</sequence>
<organism>
    <name type="scientific">Vibrio campbellii (strain ATCC BAA-1116)</name>
    <dbReference type="NCBI Taxonomy" id="2902295"/>
    <lineage>
        <taxon>Bacteria</taxon>
        <taxon>Pseudomonadati</taxon>
        <taxon>Pseudomonadota</taxon>
        <taxon>Gammaproteobacteria</taxon>
        <taxon>Vibrionales</taxon>
        <taxon>Vibrionaceae</taxon>
        <taxon>Vibrio</taxon>
    </lineage>
</organism>
<comment type="function">
    <text evidence="1">NQR complex catalyzes the reduction of ubiquinone-1 to ubiquinol by two successive reactions, coupled with the transport of Na(+) ions from the cytoplasm to the periplasm. NqrA to NqrE are probably involved in the second step, the conversion of ubisemiquinone to ubiquinol.</text>
</comment>
<comment type="catalytic activity">
    <reaction evidence="1">
        <text>a ubiquinone + n Na(+)(in) + NADH + H(+) = a ubiquinol + n Na(+)(out) + NAD(+)</text>
        <dbReference type="Rhea" id="RHEA:47748"/>
        <dbReference type="Rhea" id="RHEA-COMP:9565"/>
        <dbReference type="Rhea" id="RHEA-COMP:9566"/>
        <dbReference type="ChEBI" id="CHEBI:15378"/>
        <dbReference type="ChEBI" id="CHEBI:16389"/>
        <dbReference type="ChEBI" id="CHEBI:17976"/>
        <dbReference type="ChEBI" id="CHEBI:29101"/>
        <dbReference type="ChEBI" id="CHEBI:57540"/>
        <dbReference type="ChEBI" id="CHEBI:57945"/>
        <dbReference type="EC" id="7.2.1.1"/>
    </reaction>
</comment>
<comment type="cofactor">
    <cofactor evidence="1">
        <name>FMN</name>
        <dbReference type="ChEBI" id="CHEBI:58210"/>
    </cofactor>
</comment>
<comment type="subunit">
    <text evidence="1">Composed of six subunits; NqrA, NqrB, NqrC, NqrD, NqrE and NqrF.</text>
</comment>
<comment type="subcellular location">
    <subcellularLocation>
        <location evidence="1">Cell inner membrane</location>
        <topology evidence="1">Multi-pass membrane protein</topology>
    </subcellularLocation>
</comment>
<comment type="similarity">
    <text evidence="1">Belongs to the NqrB/RnfD family.</text>
</comment>